<organism>
    <name type="scientific">Ogataea parapolymorpha (strain ATCC 26012 / BCRC 20466 / JCM 22074 / NRRL Y-7560 / DL-1)</name>
    <name type="common">Yeast</name>
    <name type="synonym">Hansenula polymorpha</name>
    <dbReference type="NCBI Taxonomy" id="871575"/>
    <lineage>
        <taxon>Eukaryota</taxon>
        <taxon>Fungi</taxon>
        <taxon>Dikarya</taxon>
        <taxon>Ascomycota</taxon>
        <taxon>Saccharomycotina</taxon>
        <taxon>Pichiomycetes</taxon>
        <taxon>Pichiales</taxon>
        <taxon>Pichiaceae</taxon>
        <taxon>Ogataea</taxon>
    </lineage>
</organism>
<reference key="1">
    <citation type="submission" date="2001-07" db="EMBL/GenBank/DDBJ databases">
        <title>Novel reporter and strategy for the isolation and functional characterization of transcriptionally active sequences in the methylotrophic yeast Hansenula polymorpha.</title>
        <authorList>
            <person name="Agaphonov M.O."/>
            <person name="Deev A.V."/>
            <person name="Kim S.-Y."/>
            <person name="Sohn J.-H."/>
            <person name="Choi E.-S."/>
            <person name="Ter-Avanesyan M.D."/>
        </authorList>
    </citation>
    <scope>NUCLEOTIDE SEQUENCE [MRNA]</scope>
    <source>
        <strain>ATCC 26012 / BCRC 20466 / JCM 22074 / NRRL Y-7560 / DL-1</strain>
    </source>
</reference>
<reference key="2">
    <citation type="journal article" date="2013" name="BMC Genomics">
        <title>Genome sequence and analysis of methylotrophic yeast Hansenula polymorpha DL1.</title>
        <authorList>
            <person name="Ravin N.V."/>
            <person name="Eldarov M.A."/>
            <person name="Kadnikov V.V."/>
            <person name="Beletsky A.V."/>
            <person name="Schneider J."/>
            <person name="Mardanova E.S."/>
            <person name="Smekalova E.M."/>
            <person name="Zvereva M.I."/>
            <person name="Dontsova O.A."/>
            <person name="Mardanov A.V."/>
            <person name="Skryabin K.G."/>
        </authorList>
    </citation>
    <scope>NUCLEOTIDE SEQUENCE [LARGE SCALE GENOMIC DNA]</scope>
    <source>
        <strain>ATCC 26012 / BCRC 20466 / JCM 22074 / NRRL Y-7560 / DL-1</strain>
    </source>
</reference>
<comment type="function">
    <text evidence="1">Controls reversibly actin polymerization and depolymerization in a pH-sensitive manner. It has the ability to bind G- and F-actin in a 1:1 ratio of cofilin to actin. Binding to F-actin is regulated by tropomyosin. It is the major component of intranuclear and cytoplasmic actin rods. Required for accumulation of actin at the cell division site via depolymerizing actin at the cell ends. In association with myosin II has a role in the assembly of the contractile ring via severing actin filaments. Involved in the maintenance of the contractile ring once formed. In association with profilin and capping protein, has a role in the mitotic reorganization of the actin cytoskeleton (By similarity).</text>
</comment>
<comment type="subcellular location">
    <subcellularLocation>
        <location evidence="1">Cytoplasm</location>
    </subcellularLocation>
    <subcellularLocation>
        <location evidence="1">Cytoplasm</location>
        <location evidence="1">Cytoskeleton</location>
    </subcellularLocation>
    <subcellularLocation>
        <location evidence="1">Nucleus matrix</location>
    </subcellularLocation>
    <text evidence="1">Throughout the cytoplasm (but not on the cytoplasmic cables) and major component of the cortical actin cytoskeleton.</text>
</comment>
<comment type="similarity">
    <text evidence="3">Belongs to the actin-binding proteins ADF family.</text>
</comment>
<proteinExistence type="evidence at transcript level"/>
<accession>Q96VU9</accession>
<accession>E7R9G4</accession>
<accession>W1Q9F7</accession>
<evidence type="ECO:0000250" key="1"/>
<evidence type="ECO:0000255" key="2">
    <source>
        <dbReference type="PROSITE-ProRule" id="PRU00599"/>
    </source>
</evidence>
<evidence type="ECO:0000305" key="3"/>
<gene>
    <name type="primary">COF1</name>
    <name type="ORF">HPODL_02643</name>
</gene>
<feature type="chain" id="PRO_0000255627" description="Cofilin">
    <location>
        <begin position="1"/>
        <end position="143"/>
    </location>
</feature>
<feature type="domain" description="ADF-H" evidence="2">
    <location>
        <begin position="5"/>
        <end position="137"/>
    </location>
</feature>
<keyword id="KW-0009">Actin-binding</keyword>
<keyword id="KW-0131">Cell cycle</keyword>
<keyword id="KW-0132">Cell division</keyword>
<keyword id="KW-0963">Cytoplasm</keyword>
<keyword id="KW-0206">Cytoskeleton</keyword>
<keyword id="KW-0539">Nucleus</keyword>
<keyword id="KW-1185">Reference proteome</keyword>
<sequence length="143" mass="15971">MSRSGVAVSDEALKAFNDLKLGKKFKSIIYKLNDAKTEIVVDSTSTEDAYDAFVEDLPENDCRYAVYDFEYEVGQGDGKRNKIVFYQWSPDTASVRAKMVYASSKDALRRALNGIGTEIQGTDFSEVAYESVLEKISRTTGLH</sequence>
<name>COFI_OGAPD</name>
<dbReference type="EMBL" id="AF399639">
    <property type="protein sequence ID" value="AAK85273.1"/>
    <property type="molecule type" value="mRNA"/>
</dbReference>
<dbReference type="EMBL" id="AEOI02000010">
    <property type="protein sequence ID" value="ESW96000.1"/>
    <property type="molecule type" value="Genomic_DNA"/>
</dbReference>
<dbReference type="RefSeq" id="XP_013932430.1">
    <property type="nucleotide sequence ID" value="XM_014076955.1"/>
</dbReference>
<dbReference type="SMR" id="Q96VU9"/>
<dbReference type="STRING" id="871575.Q96VU9"/>
<dbReference type="GeneID" id="25772095"/>
<dbReference type="KEGG" id="opa:HPODL_02643"/>
<dbReference type="eggNOG" id="KOG1735">
    <property type="taxonomic scope" value="Eukaryota"/>
</dbReference>
<dbReference type="HOGENOM" id="CLU_094004_3_2_1"/>
<dbReference type="OMA" id="QCRFAVY"/>
<dbReference type="OrthoDB" id="10249245at2759"/>
<dbReference type="Proteomes" id="UP000008673">
    <property type="component" value="Chromosome VII"/>
</dbReference>
<dbReference type="GO" id="GO:0015629">
    <property type="term" value="C:actin cytoskeleton"/>
    <property type="evidence" value="ECO:0007669"/>
    <property type="project" value="InterPro"/>
</dbReference>
<dbReference type="GO" id="GO:0005737">
    <property type="term" value="C:cytoplasm"/>
    <property type="evidence" value="ECO:0007669"/>
    <property type="project" value="UniProtKB-SubCell"/>
</dbReference>
<dbReference type="GO" id="GO:0016363">
    <property type="term" value="C:nuclear matrix"/>
    <property type="evidence" value="ECO:0007669"/>
    <property type="project" value="UniProtKB-SubCell"/>
</dbReference>
<dbReference type="GO" id="GO:0003779">
    <property type="term" value="F:actin binding"/>
    <property type="evidence" value="ECO:0007669"/>
    <property type="project" value="UniProtKB-KW"/>
</dbReference>
<dbReference type="GO" id="GO:0030042">
    <property type="term" value="P:actin filament depolymerization"/>
    <property type="evidence" value="ECO:0007669"/>
    <property type="project" value="InterPro"/>
</dbReference>
<dbReference type="GO" id="GO:0051301">
    <property type="term" value="P:cell division"/>
    <property type="evidence" value="ECO:0007669"/>
    <property type="project" value="UniProtKB-KW"/>
</dbReference>
<dbReference type="CDD" id="cd11286">
    <property type="entry name" value="ADF_cofilin_like"/>
    <property type="match status" value="1"/>
</dbReference>
<dbReference type="FunFam" id="3.40.20.10:FF:000060">
    <property type="entry name" value="Cofilin"/>
    <property type="match status" value="1"/>
</dbReference>
<dbReference type="Gene3D" id="3.40.20.10">
    <property type="entry name" value="Severin"/>
    <property type="match status" value="1"/>
</dbReference>
<dbReference type="InterPro" id="IPR002108">
    <property type="entry name" value="ADF-H"/>
</dbReference>
<dbReference type="InterPro" id="IPR029006">
    <property type="entry name" value="ADF-H/Gelsolin-like_dom_sf"/>
</dbReference>
<dbReference type="InterPro" id="IPR017904">
    <property type="entry name" value="ADF/Cofilin"/>
</dbReference>
<dbReference type="PANTHER" id="PTHR11913">
    <property type="entry name" value="COFILIN-RELATED"/>
    <property type="match status" value="1"/>
</dbReference>
<dbReference type="Pfam" id="PF00241">
    <property type="entry name" value="Cofilin_ADF"/>
    <property type="match status" value="1"/>
</dbReference>
<dbReference type="SMART" id="SM00102">
    <property type="entry name" value="ADF"/>
    <property type="match status" value="1"/>
</dbReference>
<dbReference type="SUPFAM" id="SSF55753">
    <property type="entry name" value="Actin depolymerizing proteins"/>
    <property type="match status" value="1"/>
</dbReference>
<dbReference type="PROSITE" id="PS51263">
    <property type="entry name" value="ADF_H"/>
    <property type="match status" value="1"/>
</dbReference>
<protein>
    <recommendedName>
        <fullName>Cofilin</fullName>
    </recommendedName>
    <alternativeName>
        <fullName>Actin-depolymerizing factor 1</fullName>
    </alternativeName>
</protein>